<dbReference type="EC" id="3.4.21.-"/>
<dbReference type="EMBL" id="BX571857">
    <property type="protein sequence ID" value="CAG43139.1"/>
    <property type="molecule type" value="Genomic_DNA"/>
</dbReference>
<dbReference type="RefSeq" id="WP_000342126.1">
    <property type="nucleotide sequence ID" value="NC_002953.3"/>
</dbReference>
<dbReference type="SMR" id="Q6G9E1"/>
<dbReference type="KEGG" id="sas:SAS1363"/>
<dbReference type="HOGENOM" id="CLU_017295_3_0_9"/>
<dbReference type="GO" id="GO:0030288">
    <property type="term" value="C:outer membrane-bounded periplasmic space"/>
    <property type="evidence" value="ECO:0007669"/>
    <property type="project" value="TreeGrafter"/>
</dbReference>
<dbReference type="GO" id="GO:0005886">
    <property type="term" value="C:plasma membrane"/>
    <property type="evidence" value="ECO:0007669"/>
    <property type="project" value="UniProtKB-SubCell"/>
</dbReference>
<dbReference type="GO" id="GO:0004175">
    <property type="term" value="F:endopeptidase activity"/>
    <property type="evidence" value="ECO:0007669"/>
    <property type="project" value="TreeGrafter"/>
</dbReference>
<dbReference type="GO" id="GO:0008236">
    <property type="term" value="F:serine-type peptidase activity"/>
    <property type="evidence" value="ECO:0007669"/>
    <property type="project" value="UniProtKB-KW"/>
</dbReference>
<dbReference type="GO" id="GO:0006508">
    <property type="term" value="P:proteolysis"/>
    <property type="evidence" value="ECO:0007669"/>
    <property type="project" value="UniProtKB-KW"/>
</dbReference>
<dbReference type="GO" id="GO:0007165">
    <property type="term" value="P:signal transduction"/>
    <property type="evidence" value="ECO:0007669"/>
    <property type="project" value="TreeGrafter"/>
</dbReference>
<dbReference type="CDD" id="cd06782">
    <property type="entry name" value="cpPDZ_CPP-like"/>
    <property type="match status" value="1"/>
</dbReference>
<dbReference type="CDD" id="cd07560">
    <property type="entry name" value="Peptidase_S41_CPP"/>
    <property type="match status" value="1"/>
</dbReference>
<dbReference type="FunFam" id="2.30.42.10:FF:000063">
    <property type="entry name" value="Peptidase, S41 family"/>
    <property type="match status" value="1"/>
</dbReference>
<dbReference type="FunFam" id="3.30.750.44:FF:000001">
    <property type="entry name" value="S41 family peptidase"/>
    <property type="match status" value="1"/>
</dbReference>
<dbReference type="Gene3D" id="2.30.42.10">
    <property type="match status" value="1"/>
</dbReference>
<dbReference type="Gene3D" id="3.30.750.44">
    <property type="match status" value="1"/>
</dbReference>
<dbReference type="Gene3D" id="3.90.226.10">
    <property type="entry name" value="2-enoyl-CoA Hydratase, Chain A, domain 1"/>
    <property type="match status" value="1"/>
</dbReference>
<dbReference type="Gene3D" id="1.10.101.10">
    <property type="entry name" value="PGBD-like superfamily/PGBD"/>
    <property type="match status" value="1"/>
</dbReference>
<dbReference type="InterPro" id="IPR029045">
    <property type="entry name" value="ClpP/crotonase-like_dom_sf"/>
</dbReference>
<dbReference type="InterPro" id="IPR055210">
    <property type="entry name" value="CtpA/B_N"/>
</dbReference>
<dbReference type="InterPro" id="IPR001478">
    <property type="entry name" value="PDZ"/>
</dbReference>
<dbReference type="InterPro" id="IPR041489">
    <property type="entry name" value="PDZ_6"/>
</dbReference>
<dbReference type="InterPro" id="IPR036034">
    <property type="entry name" value="PDZ_sf"/>
</dbReference>
<dbReference type="InterPro" id="IPR004447">
    <property type="entry name" value="Peptidase_S41A"/>
</dbReference>
<dbReference type="InterPro" id="IPR002477">
    <property type="entry name" value="Peptidoglycan-bd-like"/>
</dbReference>
<dbReference type="InterPro" id="IPR036365">
    <property type="entry name" value="PGBD-like_sf"/>
</dbReference>
<dbReference type="InterPro" id="IPR036366">
    <property type="entry name" value="PGBDSf"/>
</dbReference>
<dbReference type="InterPro" id="IPR005151">
    <property type="entry name" value="Tail-specific_protease"/>
</dbReference>
<dbReference type="NCBIfam" id="TIGR00225">
    <property type="entry name" value="prc"/>
    <property type="match status" value="1"/>
</dbReference>
<dbReference type="PANTHER" id="PTHR32060:SF30">
    <property type="entry name" value="CARBOXY-TERMINAL PROCESSING PROTEASE CTPA"/>
    <property type="match status" value="1"/>
</dbReference>
<dbReference type="PANTHER" id="PTHR32060">
    <property type="entry name" value="TAIL-SPECIFIC PROTEASE"/>
    <property type="match status" value="1"/>
</dbReference>
<dbReference type="Pfam" id="PF22694">
    <property type="entry name" value="CtpB_N-like"/>
    <property type="match status" value="1"/>
</dbReference>
<dbReference type="Pfam" id="PF17820">
    <property type="entry name" value="PDZ_6"/>
    <property type="match status" value="1"/>
</dbReference>
<dbReference type="Pfam" id="PF03572">
    <property type="entry name" value="Peptidase_S41"/>
    <property type="match status" value="1"/>
</dbReference>
<dbReference type="Pfam" id="PF01471">
    <property type="entry name" value="PG_binding_1"/>
    <property type="match status" value="1"/>
</dbReference>
<dbReference type="SMART" id="SM00228">
    <property type="entry name" value="PDZ"/>
    <property type="match status" value="1"/>
</dbReference>
<dbReference type="SMART" id="SM00245">
    <property type="entry name" value="TSPc"/>
    <property type="match status" value="1"/>
</dbReference>
<dbReference type="SUPFAM" id="SSF52096">
    <property type="entry name" value="ClpP/crotonase"/>
    <property type="match status" value="1"/>
</dbReference>
<dbReference type="SUPFAM" id="SSF50156">
    <property type="entry name" value="PDZ domain-like"/>
    <property type="match status" value="1"/>
</dbReference>
<dbReference type="SUPFAM" id="SSF47090">
    <property type="entry name" value="PGBD-like"/>
    <property type="match status" value="1"/>
</dbReference>
<dbReference type="PROSITE" id="PS50106">
    <property type="entry name" value="PDZ"/>
    <property type="match status" value="1"/>
</dbReference>
<feature type="chain" id="PRO_0000233193" description="Probable CtpA-like serine protease">
    <location>
        <begin position="1"/>
        <end position="496"/>
    </location>
</feature>
<feature type="transmembrane region" description="Helical" evidence="2">
    <location>
        <begin position="39"/>
        <end position="59"/>
    </location>
</feature>
<feature type="domain" description="PDZ" evidence="3">
    <location>
        <begin position="124"/>
        <end position="206"/>
    </location>
</feature>
<feature type="region of interest" description="Disordered" evidence="4">
    <location>
        <begin position="1"/>
        <end position="27"/>
    </location>
</feature>
<feature type="compositionally biased region" description="Basic and acidic residues" evidence="4">
    <location>
        <begin position="1"/>
        <end position="16"/>
    </location>
</feature>
<feature type="compositionally biased region" description="Polar residues" evidence="4">
    <location>
        <begin position="18"/>
        <end position="27"/>
    </location>
</feature>
<feature type="active site" description="Charge relay system" evidence="1">
    <location>
        <position position="329"/>
    </location>
</feature>
<feature type="active site" description="Charge relay system" evidence="1">
    <location>
        <position position="340"/>
    </location>
</feature>
<feature type="active site" description="Charge relay system" evidence="1">
    <location>
        <position position="354"/>
    </location>
</feature>
<organism>
    <name type="scientific">Staphylococcus aureus (strain MSSA476)</name>
    <dbReference type="NCBI Taxonomy" id="282459"/>
    <lineage>
        <taxon>Bacteria</taxon>
        <taxon>Bacillati</taxon>
        <taxon>Bacillota</taxon>
        <taxon>Bacilli</taxon>
        <taxon>Bacillales</taxon>
        <taxon>Staphylococcaceae</taxon>
        <taxon>Staphylococcus</taxon>
    </lineage>
</organism>
<reference key="1">
    <citation type="journal article" date="2004" name="Proc. Natl. Acad. Sci. U.S.A.">
        <title>Complete genomes of two clinical Staphylococcus aureus strains: evidence for the rapid evolution of virulence and drug resistance.</title>
        <authorList>
            <person name="Holden M.T.G."/>
            <person name="Feil E.J."/>
            <person name="Lindsay J.A."/>
            <person name="Peacock S.J."/>
            <person name="Day N.P.J."/>
            <person name="Enright M.C."/>
            <person name="Foster T.J."/>
            <person name="Moore C.E."/>
            <person name="Hurst L."/>
            <person name="Atkin R."/>
            <person name="Barron A."/>
            <person name="Bason N."/>
            <person name="Bentley S.D."/>
            <person name="Chillingworth C."/>
            <person name="Chillingworth T."/>
            <person name="Churcher C."/>
            <person name="Clark L."/>
            <person name="Corton C."/>
            <person name="Cronin A."/>
            <person name="Doggett J."/>
            <person name="Dowd L."/>
            <person name="Feltwell T."/>
            <person name="Hance Z."/>
            <person name="Harris B."/>
            <person name="Hauser H."/>
            <person name="Holroyd S."/>
            <person name="Jagels K."/>
            <person name="James K.D."/>
            <person name="Lennard N."/>
            <person name="Line A."/>
            <person name="Mayes R."/>
            <person name="Moule S."/>
            <person name="Mungall K."/>
            <person name="Ormond D."/>
            <person name="Quail M.A."/>
            <person name="Rabbinowitsch E."/>
            <person name="Rutherford K.M."/>
            <person name="Sanders M."/>
            <person name="Sharp S."/>
            <person name="Simmonds M."/>
            <person name="Stevens K."/>
            <person name="Whitehead S."/>
            <person name="Barrell B.G."/>
            <person name="Spratt B.G."/>
            <person name="Parkhill J."/>
        </authorList>
    </citation>
    <scope>NUCLEOTIDE SEQUENCE [LARGE SCALE GENOMIC DNA]</scope>
    <source>
        <strain>MSSA476</strain>
    </source>
</reference>
<keyword id="KW-1003">Cell membrane</keyword>
<keyword id="KW-0378">Hydrolase</keyword>
<keyword id="KW-0472">Membrane</keyword>
<keyword id="KW-0645">Protease</keyword>
<keyword id="KW-0720">Serine protease</keyword>
<keyword id="KW-0812">Transmembrane</keyword>
<keyword id="KW-1133">Transmembrane helix</keyword>
<evidence type="ECO:0000250" key="1"/>
<evidence type="ECO:0000255" key="2"/>
<evidence type="ECO:0000255" key="3">
    <source>
        <dbReference type="PROSITE-ProRule" id="PRU00143"/>
    </source>
</evidence>
<evidence type="ECO:0000256" key="4">
    <source>
        <dbReference type="SAM" id="MobiDB-lite"/>
    </source>
</evidence>
<evidence type="ECO:0000305" key="5"/>
<protein>
    <recommendedName>
        <fullName>Probable CtpA-like serine protease</fullName>
        <ecNumber>3.4.21.-</ecNumber>
    </recommendedName>
</protein>
<gene>
    <name type="ordered locus">SAS1363</name>
</gene>
<sequence>MDDKQHTSSSDDERAEIATSNQDQETNSSKRVHLKRWQFISILIGTILITAVITVVAYIFINQKISGLNKTDQANLNKIENVYKILNSDYYKKQDSDKLSKAAIDGMVKELKDPYSEYLTKEQTKSFNEGVSGDFVGIGAEMQKKNDQIMVTSPMKGSPAERAGIRPKDVITKVNGKSIKGKALDEVVKDVRGKENTEVTLTVQRGSEEKDVKIKREKIHVKSVEYKKKGKVGVITINKFQNDTSGELKDAVLKAHKDGLKKIVLDLRNNPGGLLDEAVKMANIFIDKGKTVVKLEKGKDTEAIQTSNDALKEAKDMDISILVNEGSASASEVFTGALKDYNKAKVYGSKTFGKGVVQTTREFKDGSLLKYTEMKWLTPDGHYIHGKGIKPDVTIDTPKYQSLNVIPNTKTFKVGDDDKNIKTIKIGLSALGYKVDNETTQFDQALENQVKAFQQANKLEVTGEFNKETNNKFTELLVEKANKHDDVLDKLINILK</sequence>
<name>CTPAL_STAAS</name>
<proteinExistence type="inferred from homology"/>
<comment type="subcellular location">
    <subcellularLocation>
        <location evidence="5">Cell membrane</location>
        <topology evidence="5">Single-pass membrane protein</topology>
    </subcellularLocation>
</comment>
<comment type="similarity">
    <text evidence="5">Belongs to the peptidase S41A family.</text>
</comment>
<accession>Q6G9E1</accession>